<accession>A8ZU09</accession>
<sequence length="279" mass="29857">MTDTIVLNDISIGGGAPLVVIAGPCVIEDYDTTLQAAEFLKTVTDRLGIPFIFKASYDKANRSSVHSFRGPGPDLGLDILRRVKERLHVPVLSDVHTESQIGPAAQVLDIIQTPAFLCRQTDFITAVAATGKIINIKKGQFLAPWDITQVVEKARTAGNENILITERGAMFGYNNLVVDFRAIPIMQQQTGKPVIFDATHSVQLPGGQGTCSGGQREFVPCLARAAVAAGADGIFLEVHRNPDKALCDGPNSLPLEQVEPLLTALVAIRQAATEQAGHA</sequence>
<name>KDSA_DESOH</name>
<reference key="1">
    <citation type="submission" date="2007-10" db="EMBL/GenBank/DDBJ databases">
        <title>Complete sequence of Desulfococcus oleovorans Hxd3.</title>
        <authorList>
            <consortium name="US DOE Joint Genome Institute"/>
            <person name="Copeland A."/>
            <person name="Lucas S."/>
            <person name="Lapidus A."/>
            <person name="Barry K."/>
            <person name="Glavina del Rio T."/>
            <person name="Dalin E."/>
            <person name="Tice H."/>
            <person name="Pitluck S."/>
            <person name="Kiss H."/>
            <person name="Brettin T."/>
            <person name="Bruce D."/>
            <person name="Detter J.C."/>
            <person name="Han C."/>
            <person name="Schmutz J."/>
            <person name="Larimer F."/>
            <person name="Land M."/>
            <person name="Hauser L."/>
            <person name="Kyrpides N."/>
            <person name="Kim E."/>
            <person name="Wawrik B."/>
            <person name="Richardson P."/>
        </authorList>
    </citation>
    <scope>NUCLEOTIDE SEQUENCE [LARGE SCALE GENOMIC DNA]</scope>
    <source>
        <strain>DSM 6200 / JCM 39069 / Hxd3</strain>
    </source>
</reference>
<proteinExistence type="inferred from homology"/>
<organism>
    <name type="scientific">Desulfosudis oleivorans (strain DSM 6200 / JCM 39069 / Hxd3)</name>
    <name type="common">Desulfococcus oleovorans</name>
    <dbReference type="NCBI Taxonomy" id="96561"/>
    <lineage>
        <taxon>Bacteria</taxon>
        <taxon>Pseudomonadati</taxon>
        <taxon>Thermodesulfobacteriota</taxon>
        <taxon>Desulfobacteria</taxon>
        <taxon>Desulfobacterales</taxon>
        <taxon>Desulfosudaceae</taxon>
        <taxon>Desulfosudis</taxon>
    </lineage>
</organism>
<evidence type="ECO:0000255" key="1">
    <source>
        <dbReference type="HAMAP-Rule" id="MF_00056"/>
    </source>
</evidence>
<protein>
    <recommendedName>
        <fullName evidence="1">2-dehydro-3-deoxyphosphooctonate aldolase</fullName>
        <ecNumber evidence="1">2.5.1.55</ecNumber>
    </recommendedName>
    <alternativeName>
        <fullName evidence="1">3-deoxy-D-manno-octulosonic acid 8-phosphate synthase</fullName>
    </alternativeName>
    <alternativeName>
        <fullName evidence="1">KDO-8-phosphate synthase</fullName>
        <shortName evidence="1">KDO 8-P synthase</shortName>
        <shortName evidence="1">KDOPS</shortName>
    </alternativeName>
    <alternativeName>
        <fullName evidence="1">Phospho-2-dehydro-3-deoxyoctonate aldolase</fullName>
    </alternativeName>
</protein>
<keyword id="KW-0963">Cytoplasm</keyword>
<keyword id="KW-0448">Lipopolysaccharide biosynthesis</keyword>
<keyword id="KW-1185">Reference proteome</keyword>
<keyword id="KW-0808">Transferase</keyword>
<dbReference type="EC" id="2.5.1.55" evidence="1"/>
<dbReference type="EMBL" id="CP000859">
    <property type="protein sequence ID" value="ABW66321.1"/>
    <property type="molecule type" value="Genomic_DNA"/>
</dbReference>
<dbReference type="RefSeq" id="WP_012173940.1">
    <property type="nucleotide sequence ID" value="NC_009943.1"/>
</dbReference>
<dbReference type="SMR" id="A8ZU09"/>
<dbReference type="STRING" id="96561.Dole_0511"/>
<dbReference type="KEGG" id="dol:Dole_0511"/>
<dbReference type="eggNOG" id="COG2877">
    <property type="taxonomic scope" value="Bacteria"/>
</dbReference>
<dbReference type="HOGENOM" id="CLU_036666_0_0_7"/>
<dbReference type="OrthoDB" id="9802281at2"/>
<dbReference type="UniPathway" id="UPA00030"/>
<dbReference type="UniPathway" id="UPA00357">
    <property type="reaction ID" value="UER00474"/>
</dbReference>
<dbReference type="Proteomes" id="UP000008561">
    <property type="component" value="Chromosome"/>
</dbReference>
<dbReference type="GO" id="GO:0005737">
    <property type="term" value="C:cytoplasm"/>
    <property type="evidence" value="ECO:0007669"/>
    <property type="project" value="UniProtKB-SubCell"/>
</dbReference>
<dbReference type="GO" id="GO:0008676">
    <property type="term" value="F:3-deoxy-8-phosphooctulonate synthase activity"/>
    <property type="evidence" value="ECO:0007669"/>
    <property type="project" value="UniProtKB-UniRule"/>
</dbReference>
<dbReference type="GO" id="GO:0019294">
    <property type="term" value="P:keto-3-deoxy-D-manno-octulosonic acid biosynthetic process"/>
    <property type="evidence" value="ECO:0007669"/>
    <property type="project" value="UniProtKB-UniRule"/>
</dbReference>
<dbReference type="Gene3D" id="3.20.20.70">
    <property type="entry name" value="Aldolase class I"/>
    <property type="match status" value="1"/>
</dbReference>
<dbReference type="HAMAP" id="MF_00056">
    <property type="entry name" value="KDO8P_synth"/>
    <property type="match status" value="1"/>
</dbReference>
<dbReference type="InterPro" id="IPR013785">
    <property type="entry name" value="Aldolase_TIM"/>
</dbReference>
<dbReference type="InterPro" id="IPR006218">
    <property type="entry name" value="DAHP1/KDSA"/>
</dbReference>
<dbReference type="InterPro" id="IPR006269">
    <property type="entry name" value="KDO8P_synthase"/>
</dbReference>
<dbReference type="NCBIfam" id="TIGR01362">
    <property type="entry name" value="KDO8P_synth"/>
    <property type="match status" value="1"/>
</dbReference>
<dbReference type="NCBIfam" id="NF003543">
    <property type="entry name" value="PRK05198.1"/>
    <property type="match status" value="1"/>
</dbReference>
<dbReference type="PANTHER" id="PTHR21057">
    <property type="entry name" value="PHOSPHO-2-DEHYDRO-3-DEOXYHEPTONATE ALDOLASE"/>
    <property type="match status" value="1"/>
</dbReference>
<dbReference type="Pfam" id="PF00793">
    <property type="entry name" value="DAHP_synth_1"/>
    <property type="match status" value="1"/>
</dbReference>
<dbReference type="SUPFAM" id="SSF51569">
    <property type="entry name" value="Aldolase"/>
    <property type="match status" value="1"/>
</dbReference>
<comment type="catalytic activity">
    <reaction evidence="1">
        <text>D-arabinose 5-phosphate + phosphoenolpyruvate + H2O = 3-deoxy-alpha-D-manno-2-octulosonate-8-phosphate + phosphate</text>
        <dbReference type="Rhea" id="RHEA:14053"/>
        <dbReference type="ChEBI" id="CHEBI:15377"/>
        <dbReference type="ChEBI" id="CHEBI:43474"/>
        <dbReference type="ChEBI" id="CHEBI:57693"/>
        <dbReference type="ChEBI" id="CHEBI:58702"/>
        <dbReference type="ChEBI" id="CHEBI:85985"/>
        <dbReference type="EC" id="2.5.1.55"/>
    </reaction>
</comment>
<comment type="pathway">
    <text evidence="1">Carbohydrate biosynthesis; 3-deoxy-D-manno-octulosonate biosynthesis; 3-deoxy-D-manno-octulosonate from D-ribulose 5-phosphate: step 2/3.</text>
</comment>
<comment type="pathway">
    <text evidence="1">Bacterial outer membrane biogenesis; lipopolysaccharide biosynthesis.</text>
</comment>
<comment type="subcellular location">
    <subcellularLocation>
        <location evidence="1">Cytoplasm</location>
    </subcellularLocation>
</comment>
<comment type="similarity">
    <text evidence="1">Belongs to the KdsA family.</text>
</comment>
<gene>
    <name evidence="1" type="primary">kdsA</name>
    <name type="ordered locus">Dole_0511</name>
</gene>
<feature type="chain" id="PRO_1000091811" description="2-dehydro-3-deoxyphosphooctonate aldolase">
    <location>
        <begin position="1"/>
        <end position="279"/>
    </location>
</feature>